<gene>
    <name evidence="1" type="primary">hemH</name>
    <name type="ordered locus">CYA_1034</name>
</gene>
<sequence>MSKSGVLLLNLGGPETQADVQPFLYNLFADPELIRLPFPFLQRAFAWAISTLRAPKSRRNYAAIGGGSPLRRITAAQAQALQAQLVAAGYDVPVYVAMRYWHPLIESVVQQIKSDGITRLVVLPLYPQYSISTTGSSFKLLDRLWAEDPELARIERRQICSWYDQPQYVQAMARAIREQLDAFEDPAGVHVLFSAHGIPESYVTQAGDPYQQEMEACVQLIWREVGRPNRHTLSYQSRVGSVRWLQPYTETVIPELGACGVRQLLVVPISFVSEHIETLQEIDIEYRELAHQAGIREFRRVPALNADPLFIAGLVALVRPHLLTSAPAFVPAAVGGSLLER</sequence>
<dbReference type="EC" id="4.98.1.1" evidence="1"/>
<dbReference type="EMBL" id="CP000239">
    <property type="protein sequence ID" value="ABC99230.1"/>
    <property type="molecule type" value="Genomic_DNA"/>
</dbReference>
<dbReference type="RefSeq" id="WP_011429913.1">
    <property type="nucleotide sequence ID" value="NC_007775.1"/>
</dbReference>
<dbReference type="SMR" id="Q2JVK5"/>
<dbReference type="STRING" id="321327.CYA_1034"/>
<dbReference type="KEGG" id="cya:CYA_1034"/>
<dbReference type="eggNOG" id="COG0276">
    <property type="taxonomic scope" value="Bacteria"/>
</dbReference>
<dbReference type="HOGENOM" id="CLU_018884_4_1_3"/>
<dbReference type="OrthoDB" id="9809741at2"/>
<dbReference type="UniPathway" id="UPA00252">
    <property type="reaction ID" value="UER00325"/>
</dbReference>
<dbReference type="Proteomes" id="UP000008818">
    <property type="component" value="Chromosome"/>
</dbReference>
<dbReference type="GO" id="GO:0005737">
    <property type="term" value="C:cytoplasm"/>
    <property type="evidence" value="ECO:0007669"/>
    <property type="project" value="UniProtKB-SubCell"/>
</dbReference>
<dbReference type="GO" id="GO:0004325">
    <property type="term" value="F:ferrochelatase activity"/>
    <property type="evidence" value="ECO:0007669"/>
    <property type="project" value="UniProtKB-UniRule"/>
</dbReference>
<dbReference type="GO" id="GO:0046872">
    <property type="term" value="F:metal ion binding"/>
    <property type="evidence" value="ECO:0007669"/>
    <property type="project" value="UniProtKB-KW"/>
</dbReference>
<dbReference type="GO" id="GO:0006783">
    <property type="term" value="P:heme biosynthetic process"/>
    <property type="evidence" value="ECO:0007669"/>
    <property type="project" value="UniProtKB-UniRule"/>
</dbReference>
<dbReference type="CDD" id="cd00419">
    <property type="entry name" value="Ferrochelatase_C"/>
    <property type="match status" value="1"/>
</dbReference>
<dbReference type="CDD" id="cd03411">
    <property type="entry name" value="Ferrochelatase_N"/>
    <property type="match status" value="1"/>
</dbReference>
<dbReference type="FunFam" id="3.40.50.1400:FF:000006">
    <property type="entry name" value="Ferrochelatase"/>
    <property type="match status" value="1"/>
</dbReference>
<dbReference type="Gene3D" id="3.40.50.1400">
    <property type="match status" value="2"/>
</dbReference>
<dbReference type="HAMAP" id="MF_00323">
    <property type="entry name" value="Ferrochelatase"/>
    <property type="match status" value="1"/>
</dbReference>
<dbReference type="InterPro" id="IPR001015">
    <property type="entry name" value="Ferrochelatase"/>
</dbReference>
<dbReference type="InterPro" id="IPR019772">
    <property type="entry name" value="Ferrochelatase_AS"/>
</dbReference>
<dbReference type="InterPro" id="IPR033644">
    <property type="entry name" value="Ferrochelatase_C"/>
</dbReference>
<dbReference type="InterPro" id="IPR033659">
    <property type="entry name" value="Ferrochelatase_N"/>
</dbReference>
<dbReference type="NCBIfam" id="TIGR00109">
    <property type="entry name" value="hemH"/>
    <property type="match status" value="1"/>
</dbReference>
<dbReference type="PANTHER" id="PTHR11108">
    <property type="entry name" value="FERROCHELATASE"/>
    <property type="match status" value="1"/>
</dbReference>
<dbReference type="PANTHER" id="PTHR11108:SF1">
    <property type="entry name" value="FERROCHELATASE, MITOCHONDRIAL"/>
    <property type="match status" value="1"/>
</dbReference>
<dbReference type="Pfam" id="PF00762">
    <property type="entry name" value="Ferrochelatase"/>
    <property type="match status" value="1"/>
</dbReference>
<dbReference type="SUPFAM" id="SSF53800">
    <property type="entry name" value="Chelatase"/>
    <property type="match status" value="1"/>
</dbReference>
<dbReference type="PROSITE" id="PS00534">
    <property type="entry name" value="FERROCHELATASE"/>
    <property type="match status" value="1"/>
</dbReference>
<keyword id="KW-0963">Cytoplasm</keyword>
<keyword id="KW-0350">Heme biosynthesis</keyword>
<keyword id="KW-0408">Iron</keyword>
<keyword id="KW-0456">Lyase</keyword>
<keyword id="KW-0479">Metal-binding</keyword>
<keyword id="KW-0627">Porphyrin biosynthesis</keyword>
<reference key="1">
    <citation type="journal article" date="2007" name="ISME J.">
        <title>Population level functional diversity in a microbial community revealed by comparative genomic and metagenomic analyses.</title>
        <authorList>
            <person name="Bhaya D."/>
            <person name="Grossman A.R."/>
            <person name="Steunou A.-S."/>
            <person name="Khuri N."/>
            <person name="Cohan F.M."/>
            <person name="Hamamura N."/>
            <person name="Melendrez M.C."/>
            <person name="Bateson M.M."/>
            <person name="Ward D.M."/>
            <person name="Heidelberg J.F."/>
        </authorList>
    </citation>
    <scope>NUCLEOTIDE SEQUENCE [LARGE SCALE GENOMIC DNA]</scope>
    <source>
        <strain>JA-3-3Ab</strain>
    </source>
</reference>
<evidence type="ECO:0000255" key="1">
    <source>
        <dbReference type="HAMAP-Rule" id="MF_00323"/>
    </source>
</evidence>
<proteinExistence type="inferred from homology"/>
<feature type="chain" id="PRO_1000019375" description="Ferrochelatase">
    <location>
        <begin position="1"/>
        <end position="341"/>
    </location>
</feature>
<feature type="binding site" evidence="1">
    <location>
        <position position="196"/>
    </location>
    <ligand>
        <name>Fe cation</name>
        <dbReference type="ChEBI" id="CHEBI:24875"/>
    </ligand>
</feature>
<feature type="binding site" evidence="1">
    <location>
        <position position="277"/>
    </location>
    <ligand>
        <name>Fe cation</name>
        <dbReference type="ChEBI" id="CHEBI:24875"/>
    </ligand>
</feature>
<accession>Q2JVK5</accession>
<protein>
    <recommendedName>
        <fullName evidence="1">Ferrochelatase</fullName>
        <ecNumber evidence="1">4.98.1.1</ecNumber>
    </recommendedName>
    <alternativeName>
        <fullName evidence="1">Heme synthase</fullName>
    </alternativeName>
    <alternativeName>
        <fullName evidence="1">Protoheme ferro-lyase</fullName>
    </alternativeName>
</protein>
<comment type="function">
    <text evidence="1">Catalyzes the ferrous insertion into protoporphyrin IX.</text>
</comment>
<comment type="catalytic activity">
    <reaction evidence="1">
        <text>heme b + 2 H(+) = protoporphyrin IX + Fe(2+)</text>
        <dbReference type="Rhea" id="RHEA:22584"/>
        <dbReference type="ChEBI" id="CHEBI:15378"/>
        <dbReference type="ChEBI" id="CHEBI:29033"/>
        <dbReference type="ChEBI" id="CHEBI:57306"/>
        <dbReference type="ChEBI" id="CHEBI:60344"/>
        <dbReference type="EC" id="4.98.1.1"/>
    </reaction>
</comment>
<comment type="pathway">
    <text evidence="1">Porphyrin-containing compound metabolism; protoheme biosynthesis; protoheme from protoporphyrin-IX: step 1/1.</text>
</comment>
<comment type="subcellular location">
    <subcellularLocation>
        <location evidence="1">Cytoplasm</location>
    </subcellularLocation>
</comment>
<comment type="similarity">
    <text evidence="1">Belongs to the ferrochelatase family.</text>
</comment>
<organism>
    <name type="scientific">Synechococcus sp. (strain JA-3-3Ab)</name>
    <name type="common">Cyanobacteria bacterium Yellowstone A-Prime</name>
    <dbReference type="NCBI Taxonomy" id="321327"/>
    <lineage>
        <taxon>Bacteria</taxon>
        <taxon>Bacillati</taxon>
        <taxon>Cyanobacteriota</taxon>
        <taxon>Cyanophyceae</taxon>
        <taxon>Synechococcales</taxon>
        <taxon>Synechococcaceae</taxon>
        <taxon>Synechococcus</taxon>
    </lineage>
</organism>
<name>HEMH_SYNJA</name>